<reference key="1">
    <citation type="journal article" date="1997" name="Nature">
        <title>The nucleotide sequence of Saccharomyces cerevisiae chromosome VII.</title>
        <authorList>
            <person name="Tettelin H."/>
            <person name="Agostoni-Carbone M.L."/>
            <person name="Albermann K."/>
            <person name="Albers M."/>
            <person name="Arroyo J."/>
            <person name="Backes U."/>
            <person name="Barreiros T."/>
            <person name="Bertani I."/>
            <person name="Bjourson A.J."/>
            <person name="Brueckner M."/>
            <person name="Bruschi C.V."/>
            <person name="Carignani G."/>
            <person name="Castagnoli L."/>
            <person name="Cerdan E."/>
            <person name="Clemente M.L."/>
            <person name="Coblenz A."/>
            <person name="Coglievina M."/>
            <person name="Coissac E."/>
            <person name="Defoor E."/>
            <person name="Del Bino S."/>
            <person name="Delius H."/>
            <person name="Delneri D."/>
            <person name="de Wergifosse P."/>
            <person name="Dujon B."/>
            <person name="Durand P."/>
            <person name="Entian K.-D."/>
            <person name="Eraso P."/>
            <person name="Escribano V."/>
            <person name="Fabiani L."/>
            <person name="Fartmann B."/>
            <person name="Feroli F."/>
            <person name="Feuermann M."/>
            <person name="Frontali L."/>
            <person name="Garcia-Gonzalez M."/>
            <person name="Garcia-Saez M.I."/>
            <person name="Goffeau A."/>
            <person name="Guerreiro P."/>
            <person name="Hani J."/>
            <person name="Hansen M."/>
            <person name="Hebling U."/>
            <person name="Hernandez K."/>
            <person name="Heumann K."/>
            <person name="Hilger F."/>
            <person name="Hofmann B."/>
            <person name="Indge K.J."/>
            <person name="James C.M."/>
            <person name="Klima R."/>
            <person name="Koetter P."/>
            <person name="Kramer B."/>
            <person name="Kramer W."/>
            <person name="Lauquin G."/>
            <person name="Leuther H."/>
            <person name="Louis E.J."/>
            <person name="Maillier E."/>
            <person name="Marconi A."/>
            <person name="Martegani E."/>
            <person name="Mazon M.J."/>
            <person name="Mazzoni C."/>
            <person name="McReynolds A.D.K."/>
            <person name="Melchioretto P."/>
            <person name="Mewes H.-W."/>
            <person name="Minenkova O."/>
            <person name="Mueller-Auer S."/>
            <person name="Nawrocki A."/>
            <person name="Netter P."/>
            <person name="Neu R."/>
            <person name="Nombela C."/>
            <person name="Oliver S.G."/>
            <person name="Panzeri L."/>
            <person name="Paoluzi S."/>
            <person name="Plevani P."/>
            <person name="Portetelle D."/>
            <person name="Portillo F."/>
            <person name="Potier S."/>
            <person name="Purnelle B."/>
            <person name="Rieger M."/>
            <person name="Riles L."/>
            <person name="Rinaldi T."/>
            <person name="Robben J."/>
            <person name="Rodrigues-Pousada C."/>
            <person name="Rodriguez-Belmonte E."/>
            <person name="Rodriguez-Torres A.M."/>
            <person name="Rose M."/>
            <person name="Ruzzi M."/>
            <person name="Saliola M."/>
            <person name="Sanchez-Perez M."/>
            <person name="Schaefer B."/>
            <person name="Schaefer M."/>
            <person name="Scharfe M."/>
            <person name="Schmidheini T."/>
            <person name="Schreer A."/>
            <person name="Skala J."/>
            <person name="Souciet J.-L."/>
            <person name="Steensma H.Y."/>
            <person name="Talla E."/>
            <person name="Thierry A."/>
            <person name="Vandenbol M."/>
            <person name="van der Aart Q.J.M."/>
            <person name="Van Dyck L."/>
            <person name="Vanoni M."/>
            <person name="Verhasselt P."/>
            <person name="Voet M."/>
            <person name="Volckaert G."/>
            <person name="Wambutt R."/>
            <person name="Watson M.D."/>
            <person name="Weber N."/>
            <person name="Wedler E."/>
            <person name="Wedler H."/>
            <person name="Wipfli P."/>
            <person name="Wolf K."/>
            <person name="Wright L.F."/>
            <person name="Zaccaria P."/>
            <person name="Zimmermann M."/>
            <person name="Zollner A."/>
            <person name="Kleine K."/>
        </authorList>
    </citation>
    <scope>NUCLEOTIDE SEQUENCE [LARGE SCALE GENOMIC DNA]</scope>
    <source>
        <strain>ATCC 204508 / S288c</strain>
    </source>
</reference>
<reference key="2">
    <citation type="journal article" date="2014" name="G3 (Bethesda)">
        <title>The reference genome sequence of Saccharomyces cerevisiae: Then and now.</title>
        <authorList>
            <person name="Engel S.R."/>
            <person name="Dietrich F.S."/>
            <person name="Fisk D.G."/>
            <person name="Binkley G."/>
            <person name="Balakrishnan R."/>
            <person name="Costanzo M.C."/>
            <person name="Dwight S.S."/>
            <person name="Hitz B.C."/>
            <person name="Karra K."/>
            <person name="Nash R.S."/>
            <person name="Weng S."/>
            <person name="Wong E.D."/>
            <person name="Lloyd P."/>
            <person name="Skrzypek M.S."/>
            <person name="Miyasato S.R."/>
            <person name="Simison M."/>
            <person name="Cherry J.M."/>
        </authorList>
    </citation>
    <scope>GENOME REANNOTATION</scope>
    <source>
        <strain>ATCC 204508 / S288c</strain>
    </source>
</reference>
<reference key="3">
    <citation type="journal article" date="2007" name="Genome Res.">
        <title>Approaching a complete repository of sequence-verified protein-encoding clones for Saccharomyces cerevisiae.</title>
        <authorList>
            <person name="Hu Y."/>
            <person name="Rolfs A."/>
            <person name="Bhullar B."/>
            <person name="Murthy T.V.S."/>
            <person name="Zhu C."/>
            <person name="Berger M.F."/>
            <person name="Camargo A.A."/>
            <person name="Kelley F."/>
            <person name="McCarron S."/>
            <person name="Jepson D."/>
            <person name="Richardson A."/>
            <person name="Raphael J."/>
            <person name="Moreira D."/>
            <person name="Taycher E."/>
            <person name="Zuo D."/>
            <person name="Mohr S."/>
            <person name="Kane M.F."/>
            <person name="Williamson J."/>
            <person name="Simpson A.J.G."/>
            <person name="Bulyk M.L."/>
            <person name="Harlow E."/>
            <person name="Marsischky G."/>
            <person name="Kolodner R.D."/>
            <person name="LaBaer J."/>
        </authorList>
    </citation>
    <scope>NUCLEOTIDE SEQUENCE [GENOMIC DNA]</scope>
    <source>
        <strain>ATCC 204508 / S288c</strain>
    </source>
</reference>
<reference key="4">
    <citation type="journal article" date="1999" name="Eur. J. Biochem.">
        <title>Pregnenolone esterification in Saccharomyces cerevisiae. A potential detoxification mechanism.</title>
        <authorList>
            <person name="Cauet G."/>
            <person name="Degryse E."/>
            <person name="Ledoux C."/>
            <person name="Spagnoli R."/>
            <person name="Achstetter T."/>
        </authorList>
    </citation>
    <scope>PROTEIN SEQUENCE OF 130-139 AND 145-160</scope>
    <scope>FUNCTION</scope>
    <scope>CATALYTIC ACTIVITY</scope>
    <scope>BIOPHYSICOCHEMICAL PROPERTIES</scope>
    <scope>DISRUPTION PHENOTYPE</scope>
</reference>
<reference key="5">
    <citation type="journal article" date="2003" name="Appl. Environ. Microbiol.">
        <title>Expression levels of the yeast alcohol acetyltransferase genes ATF1, Lg-ATF1, and ATF2 control the formation of a broad range of volatile esters.</title>
        <authorList>
            <person name="Verstrepen K.J."/>
            <person name="Van Laere S.D."/>
            <person name="Vanderhaegen B.M."/>
            <person name="Derdelinckx G."/>
            <person name="Dufour J.P."/>
            <person name="Pretorius I.S."/>
            <person name="Winderickx J."/>
            <person name="Thevelein J.M."/>
            <person name="Delvaux F.R."/>
        </authorList>
    </citation>
    <scope>FUNCTION</scope>
    <scope>DISRUPTION PHENOTYPE</scope>
</reference>
<reference key="6">
    <citation type="journal article" date="2003" name="J. Ind. Microbiol. Biotechnol.">
        <title>Heterologous expression of the Saccharomyces cerevisiae alcohol acetyltransferase genes in Clostridium acetobutylicum and Escherichia coli for the production of isoamyl acetate.</title>
        <authorList>
            <person name="Horton C.E."/>
            <person name="Huang K.X."/>
            <person name="Bennett G.N."/>
            <person name="Rudolph F.B."/>
        </authorList>
    </citation>
    <scope>FUNCTION</scope>
</reference>
<reference key="7">
    <citation type="journal article" date="2003" name="Nature">
        <title>Global analysis of protein expression in yeast.</title>
        <authorList>
            <person name="Ghaemmaghami S."/>
            <person name="Huh W.-K."/>
            <person name="Bower K."/>
            <person name="Howson R.W."/>
            <person name="Belle A."/>
            <person name="Dephoure N."/>
            <person name="O'Shea E.K."/>
            <person name="Weissman J.S."/>
        </authorList>
    </citation>
    <scope>LEVEL OF PROTEIN EXPRESSION [LARGE SCALE ANALYSIS]</scope>
</reference>
<reference key="8">
    <citation type="journal article" date="2006" name="Yeast">
        <title>The effect of increased yeast alcohol acetyltransferase and esterase activity on the flavour profiles of wine and distillates.</title>
        <authorList>
            <person name="Lilly M."/>
            <person name="Bauer F.F."/>
            <person name="Lambrechts M.G."/>
            <person name="Swiegers J.H."/>
            <person name="Cozzolino D."/>
            <person name="Pretorius I.S."/>
        </authorList>
    </citation>
    <scope>FUNCTION</scope>
</reference>
<reference key="9">
    <citation type="journal article" date="2008" name="Bioprocess Biosyst. Eng.">
        <title>Aerobic production of isoamyl acetate by overexpression of the yeast alcohol acetyl-transferases AFT1 and AFT2 in Escherichia coli and using low-cost fermentation ingredients.</title>
        <authorList>
            <person name="Singh R."/>
            <person name="Vadlani P.V."/>
            <person name="Harrison M.L."/>
            <person name="Bennett G.N."/>
            <person name="San K.Y."/>
        </authorList>
    </citation>
    <scope>FUNCTION</scope>
</reference>
<reference key="10">
    <citation type="journal article" date="2014" name="PLoS ONE">
        <title>Dual N- and C-terminal helices are required for endoplasmic reticulum and lipid droplet association of alcohol acetyltransferases in Saccharomyces cerevisiae.</title>
        <authorList>
            <person name="Lin J.L."/>
            <person name="Wheeldon I."/>
        </authorList>
    </citation>
    <scope>SUBCELLULAR LOCATION</scope>
    <scope>DOMAIN</scope>
</reference>
<name>ATF2_YEAST</name>
<organism>
    <name type="scientific">Saccharomyces cerevisiae (strain ATCC 204508 / S288c)</name>
    <name type="common">Baker's yeast</name>
    <dbReference type="NCBI Taxonomy" id="559292"/>
    <lineage>
        <taxon>Eukaryota</taxon>
        <taxon>Fungi</taxon>
        <taxon>Dikarya</taxon>
        <taxon>Ascomycota</taxon>
        <taxon>Saccharomycotina</taxon>
        <taxon>Saccharomycetes</taxon>
        <taxon>Saccharomycetales</taxon>
        <taxon>Saccharomycetaceae</taxon>
        <taxon>Saccharomyces</taxon>
    </lineage>
</organism>
<accession>P53296</accession>
<accession>D6VUW1</accession>
<accession>E9P955</accession>
<gene>
    <name evidence="9" type="primary">ATF2</name>
    <name type="ordered locus">YGR177C</name>
    <name type="ORF">G7135</name>
</gene>
<keyword id="KW-0012">Acyltransferase</keyword>
<keyword id="KW-0903">Direct protein sequencing</keyword>
<keyword id="KW-0256">Endoplasmic reticulum</keyword>
<keyword id="KW-0551">Lipid droplet</keyword>
<keyword id="KW-0472">Membrane</keyword>
<keyword id="KW-1185">Reference proteome</keyword>
<keyword id="KW-0808">Transferase</keyword>
<evidence type="ECO:0000250" key="1">
    <source>
        <dbReference type="UniProtKB" id="P40353"/>
    </source>
</evidence>
<evidence type="ECO:0000269" key="2">
    <source>
    </source>
</evidence>
<evidence type="ECO:0000269" key="3">
    <source>
    </source>
</evidence>
<evidence type="ECO:0000269" key="4">
    <source>
    </source>
</evidence>
<evidence type="ECO:0000269" key="5">
    <source>
    </source>
</evidence>
<evidence type="ECO:0000269" key="6">
    <source>
    </source>
</evidence>
<evidence type="ECO:0000269" key="7">
    <source>
    </source>
</evidence>
<evidence type="ECO:0000269" key="8">
    <source>
    </source>
</evidence>
<evidence type="ECO:0000303" key="9">
    <source>
    </source>
</evidence>
<evidence type="ECO:0000305" key="10"/>
<comment type="function">
    <text evidence="2 3 4 6 7">Can use acetyl-CoA to synthesize acetate esters from various alcohols, producing ethyl acetate, isoamyl acetate, isobutyl acetate, butyl acetate, hexyl acetate, heptyl acetate and octyl acetate (PubMed:12937998, PubMed:12957907, PubMed:16845703, PubMed:17891501). ATF2 seems to play only a minor role in the acetate ester synthesis, compared to ATF1 (PubMed:12957907). Plays an active role in the detoxification hydroxysteroids and possibly certain phytochemicals, in association with the efflux pumps PDR5 and SNQ2 (PubMed:10103065).</text>
</comment>
<comment type="catalytic activity">
    <reaction evidence="2">
        <text>an aliphatic alcohol + acetyl-CoA = an acetyl ester + CoA</text>
        <dbReference type="Rhea" id="RHEA:17229"/>
        <dbReference type="ChEBI" id="CHEBI:2571"/>
        <dbReference type="ChEBI" id="CHEBI:47622"/>
        <dbReference type="ChEBI" id="CHEBI:57287"/>
        <dbReference type="ChEBI" id="CHEBI:57288"/>
        <dbReference type="EC" id="2.3.1.84"/>
    </reaction>
</comment>
<comment type="biophysicochemical properties">
    <kinetics>
        <KM evidence="2">0.52 uM for pregnenolone</KM>
        <KM evidence="2">1.1 uM for acetyl-CoA</KM>
    </kinetics>
</comment>
<comment type="subcellular location">
    <subcellularLocation>
        <location evidence="8">Lipid droplet</location>
    </subcellularLocation>
    <subcellularLocation>
        <location evidence="8">Endoplasmic reticulum membrane</location>
        <topology evidence="8">Peripheral membrane protein</topology>
    </subcellularLocation>
    <text evidence="8">Traffics to lipid droplets during the stationary phase (PubMed:25093817).</text>
</comment>
<comment type="domain">
    <text evidence="8">Segments of the N- and C-terminal domains (residues 19-36 and 515-532, respectively) are predicted to be amphipathic helices and are essential for endoplasmic reticulum membrane association (PubMed:25093817).</text>
</comment>
<comment type="disruption phenotype">
    <text evidence="2 4">Results in an 18% decrease in isoamyl acetate formation and causes a 13% reduction of ethyl acetate formation (PubMed:12957907). Leads to the complete elimination of acetyl-CoA:pregnenolone acetyltransferase activity and consequently abolishes the esterification of pregnenolone and increases the toxicity of pregnenolone (PubMed:10103065).</text>
</comment>
<comment type="miscellaneous">
    <text evidence="5">Present with 3000 molecules/cell in log phase SD medium.</text>
</comment>
<comment type="similarity">
    <text evidence="10">Belongs to the ATF1 alcohol acetyltransferase family.</text>
</comment>
<dbReference type="EC" id="2.3.1.84" evidence="2"/>
<dbReference type="EMBL" id="Z72961">
    <property type="protein sequence ID" value="CAA97203.1"/>
    <property type="molecule type" value="Genomic_DNA"/>
</dbReference>
<dbReference type="EMBL" id="AY723818">
    <property type="protein sequence ID" value="AAU09735.1"/>
    <property type="molecule type" value="Genomic_DNA"/>
</dbReference>
<dbReference type="EMBL" id="BK006941">
    <property type="protein sequence ID" value="DAA08272.1"/>
    <property type="molecule type" value="Genomic_DNA"/>
</dbReference>
<dbReference type="PIR" id="S64491">
    <property type="entry name" value="S64491"/>
</dbReference>
<dbReference type="RefSeq" id="NP_011693.1">
    <property type="nucleotide sequence ID" value="NM_001181306.1"/>
</dbReference>
<dbReference type="BioGRID" id="33429">
    <property type="interactions" value="66"/>
</dbReference>
<dbReference type="DIP" id="DIP-5544N"/>
<dbReference type="FunCoup" id="P53296">
    <property type="interactions" value="62"/>
</dbReference>
<dbReference type="IntAct" id="P53296">
    <property type="interactions" value="7"/>
</dbReference>
<dbReference type="MINT" id="P53296"/>
<dbReference type="STRING" id="4932.YGR177C"/>
<dbReference type="iPTMnet" id="P53296"/>
<dbReference type="PaxDb" id="4932-YGR177C"/>
<dbReference type="PeptideAtlas" id="P53296"/>
<dbReference type="EnsemblFungi" id="YGR177C_mRNA">
    <property type="protein sequence ID" value="YGR177C"/>
    <property type="gene ID" value="YGR177C"/>
</dbReference>
<dbReference type="GeneID" id="853088"/>
<dbReference type="KEGG" id="sce:YGR177C"/>
<dbReference type="AGR" id="SGD:S000003409"/>
<dbReference type="SGD" id="S000003409">
    <property type="gene designation" value="ATF2"/>
</dbReference>
<dbReference type="VEuPathDB" id="FungiDB:YGR177C"/>
<dbReference type="eggNOG" id="ENOG502QTAU">
    <property type="taxonomic scope" value="Eukaryota"/>
</dbReference>
<dbReference type="GeneTree" id="ENSGT00940000176620"/>
<dbReference type="HOGENOM" id="CLU_043707_0_0_1"/>
<dbReference type="InParanoid" id="P53296"/>
<dbReference type="OMA" id="HLENYFA"/>
<dbReference type="OrthoDB" id="3979966at2759"/>
<dbReference type="BioCyc" id="MetaCyc:YGR177C-MONOMER"/>
<dbReference type="BioCyc" id="YEAST:YGR177C-MONOMER"/>
<dbReference type="BRENDA" id="2.3.1.84">
    <property type="organism ID" value="984"/>
</dbReference>
<dbReference type="BioGRID-ORCS" id="853088">
    <property type="hits" value="2 hits in 10 CRISPR screens"/>
</dbReference>
<dbReference type="PRO" id="PR:P53296"/>
<dbReference type="Proteomes" id="UP000002311">
    <property type="component" value="Chromosome VII"/>
</dbReference>
<dbReference type="RNAct" id="P53296">
    <property type="molecule type" value="protein"/>
</dbReference>
<dbReference type="GO" id="GO:0005737">
    <property type="term" value="C:cytoplasm"/>
    <property type="evidence" value="ECO:0007005"/>
    <property type="project" value="SGD"/>
</dbReference>
<dbReference type="GO" id="GO:0005783">
    <property type="term" value="C:endoplasmic reticulum"/>
    <property type="evidence" value="ECO:0007005"/>
    <property type="project" value="SGD"/>
</dbReference>
<dbReference type="GO" id="GO:0005789">
    <property type="term" value="C:endoplasmic reticulum membrane"/>
    <property type="evidence" value="ECO:0000314"/>
    <property type="project" value="SGD"/>
</dbReference>
<dbReference type="GO" id="GO:0005811">
    <property type="term" value="C:lipid droplet"/>
    <property type="evidence" value="ECO:0007669"/>
    <property type="project" value="UniProtKB-SubCell"/>
</dbReference>
<dbReference type="GO" id="GO:0004026">
    <property type="term" value="F:alcohol O-acetyltransferase activity"/>
    <property type="evidence" value="ECO:0000314"/>
    <property type="project" value="SGD"/>
</dbReference>
<dbReference type="GO" id="GO:0008080">
    <property type="term" value="F:N-acetyltransferase activity"/>
    <property type="evidence" value="ECO:0000318"/>
    <property type="project" value="GO_Central"/>
</dbReference>
<dbReference type="GO" id="GO:1901089">
    <property type="term" value="P:acetate ester metabolic process involved in fermentation"/>
    <property type="evidence" value="ECO:0000316"/>
    <property type="project" value="SGD"/>
</dbReference>
<dbReference type="GO" id="GO:0009636">
    <property type="term" value="P:response to toxic substance"/>
    <property type="evidence" value="ECO:0000315"/>
    <property type="project" value="SGD"/>
</dbReference>
<dbReference type="GO" id="GO:0008202">
    <property type="term" value="P:steroid metabolic process"/>
    <property type="evidence" value="ECO:0000315"/>
    <property type="project" value="SGD"/>
</dbReference>
<dbReference type="InterPro" id="IPR052058">
    <property type="entry name" value="Alcohol_O-acetyltransferase"/>
</dbReference>
<dbReference type="InterPro" id="IPR010828">
    <property type="entry name" value="Atf2/Sli1-like"/>
</dbReference>
<dbReference type="PANTHER" id="PTHR28037">
    <property type="entry name" value="ALCOHOL O-ACETYLTRANSFERASE 1-RELATED"/>
    <property type="match status" value="1"/>
</dbReference>
<dbReference type="PANTHER" id="PTHR28037:SF1">
    <property type="entry name" value="ALCOHOL O-ACETYLTRANSFERASE 1-RELATED"/>
    <property type="match status" value="1"/>
</dbReference>
<dbReference type="Pfam" id="PF07247">
    <property type="entry name" value="AATase"/>
    <property type="match status" value="1"/>
</dbReference>
<protein>
    <recommendedName>
        <fullName evidence="9">Alcohol O-acetyltransferase 2</fullName>
        <shortName evidence="9">AATase 2</shortName>
        <ecNumber evidence="2">2.3.1.84</ecNumber>
    </recommendedName>
    <alternativeName>
        <fullName evidence="9">Acetyl-CoA:pregnenolone acetyltransferase</fullName>
        <shortName evidence="9">APAT</shortName>
    </alternativeName>
</protein>
<sequence length="535" mass="61898">MEDIEGYEPHITQELIDRGHARRMGHLENYFAVLSRQKMYSNFTVYAELNKGVNKRQLMLVLKVLLQKYSTLAHTIIPKHYPHHEAYYSSEEYLSKPFPQHDFIKVISHLEFDDLIMNNQPEYREVMEKISEQFKKDDFKVTNRLIELISPVIIPLGNPKRPNWRLICLPGKDTDGFETWKNFVYVTNHCGSDGVSGSNFFKDLALLFCKIEEKGFDYDEEFIEDQVIIDYDRDYTEISKLPKPITDRIDYKPALTSLPKFFLTTFIYEHCNFKTSSESTLTARYSPSSNANASYNYLLHFSTKQVEQIRAQIKKNVHDGCTLTPFIQACFLVALYRLDKLFTKSLLEYGFDVAIPSNARRFLPNDEELRDSYKYGSNVGGSHYAYLISSFDIPEGDNDKFWSLVEYYYDRFLESYDNGDHLIGLGVLQLDFIVENKNIDSLLANSYLHQQRGGAIISNTGLVSQDTTKPYYVRDLIFSQSAGALRFAFGLNVCSTNVNGMNMDMSVVQGTLRDRGEWESFCKLFYQTIGEFASL</sequence>
<proteinExistence type="evidence at protein level"/>
<feature type="chain" id="PRO_0000064721" description="Alcohol O-acetyltransferase 2">
    <location>
        <begin position="1"/>
        <end position="535"/>
    </location>
</feature>
<feature type="region of interest" description="Membrane association" evidence="8">
    <location>
        <begin position="19"/>
        <end position="36"/>
    </location>
</feature>
<feature type="region of interest" description="Membrane association" evidence="8">
    <location>
        <begin position="515"/>
        <end position="532"/>
    </location>
</feature>
<feature type="active site" description="Charge relay system" evidence="1">
    <location>
        <position position="189"/>
    </location>
</feature>
<feature type="active site" description="Charge relay system" evidence="1">
    <location>
        <position position="193"/>
    </location>
</feature>
<feature type="sequence conflict" description="In Ref. 3; AAU09735." evidence="10" ref="3">
    <original>T</original>
    <variation>A</variation>
    <location>
        <position position="179"/>
    </location>
</feature>